<sequence>MDIVLGIRVEDCTLVATSKAATRGISVLKDTDDKTRQLNSHNLMAYSGEAGDTVQFAEYIQANTQLYTMRENDTELSPKATASFVRNQLATSIRSRKPYQVNVLLAGYDTNTGKPSLNWIDYLGTQVELPYAAHGYAGFYCTSLLDKHYKKGMNFEDGLDLLKKCIKELETRMPIDFKGCYIKVVDKEGIKLVE</sequence>
<dbReference type="EMBL" id="CH408155">
    <property type="protein sequence ID" value="EDK36409.1"/>
    <property type="molecule type" value="Genomic_DNA"/>
</dbReference>
<dbReference type="EMBL" id="AY138984">
    <property type="protein sequence ID" value="AAN08876.1"/>
    <property type="status" value="ALT_FRAME"/>
    <property type="molecule type" value="Genomic_DNA"/>
</dbReference>
<dbReference type="RefSeq" id="XP_001487130.1">
    <property type="nucleotide sequence ID" value="XM_001487080.1"/>
</dbReference>
<dbReference type="SMR" id="A5DB52"/>
<dbReference type="FunCoup" id="A5DB52">
    <property type="interactions" value="1041"/>
</dbReference>
<dbReference type="STRING" id="294746.A5DB52"/>
<dbReference type="MEROPS" id="T01.984"/>
<dbReference type="GeneID" id="5129627"/>
<dbReference type="KEGG" id="pgu:PGUG_00507"/>
<dbReference type="VEuPathDB" id="FungiDB:PGUG_00507"/>
<dbReference type="eggNOG" id="KOG0177">
    <property type="taxonomic scope" value="Eukaryota"/>
</dbReference>
<dbReference type="HOGENOM" id="CLU_035750_12_0_1"/>
<dbReference type="InParanoid" id="A5DB52"/>
<dbReference type="OMA" id="MKRDHDK"/>
<dbReference type="OrthoDB" id="268428at2759"/>
<dbReference type="Proteomes" id="UP000001997">
    <property type="component" value="Unassembled WGS sequence"/>
</dbReference>
<dbReference type="GO" id="GO:0005737">
    <property type="term" value="C:cytoplasm"/>
    <property type="evidence" value="ECO:0007669"/>
    <property type="project" value="UniProtKB-SubCell"/>
</dbReference>
<dbReference type="GO" id="GO:0005634">
    <property type="term" value="C:nucleus"/>
    <property type="evidence" value="ECO:0007669"/>
    <property type="project" value="UniProtKB-SubCell"/>
</dbReference>
<dbReference type="GO" id="GO:0019774">
    <property type="term" value="C:proteasome core complex, beta-subunit complex"/>
    <property type="evidence" value="ECO:0000250"/>
    <property type="project" value="UniProtKB"/>
</dbReference>
<dbReference type="GO" id="GO:0010499">
    <property type="term" value="P:proteasomal ubiquitin-independent protein catabolic process"/>
    <property type="evidence" value="ECO:0007669"/>
    <property type="project" value="UniProtKB-ARBA"/>
</dbReference>
<dbReference type="GO" id="GO:0043161">
    <property type="term" value="P:proteasome-mediated ubiquitin-dependent protein catabolic process"/>
    <property type="evidence" value="ECO:0007669"/>
    <property type="project" value="UniProtKB-ARBA"/>
</dbReference>
<dbReference type="CDD" id="cd03758">
    <property type="entry name" value="proteasome_beta_type_2"/>
    <property type="match status" value="1"/>
</dbReference>
<dbReference type="FunFam" id="3.60.20.10:FF:000008">
    <property type="entry name" value="Proteasome subunit beta type-4"/>
    <property type="match status" value="1"/>
</dbReference>
<dbReference type="Gene3D" id="3.60.20.10">
    <property type="entry name" value="Glutamine Phosphoribosylpyrophosphate, subunit 1, domain 1"/>
    <property type="match status" value="1"/>
</dbReference>
<dbReference type="InterPro" id="IPR029055">
    <property type="entry name" value="Ntn_hydrolases_N"/>
</dbReference>
<dbReference type="InterPro" id="IPR035206">
    <property type="entry name" value="Proteasome_beta2"/>
</dbReference>
<dbReference type="InterPro" id="IPR016050">
    <property type="entry name" value="Proteasome_bsu_CS"/>
</dbReference>
<dbReference type="InterPro" id="IPR001353">
    <property type="entry name" value="Proteasome_sua/b"/>
</dbReference>
<dbReference type="InterPro" id="IPR023333">
    <property type="entry name" value="Proteasome_suB-type"/>
</dbReference>
<dbReference type="PANTHER" id="PTHR32194">
    <property type="entry name" value="METALLOPROTEASE TLDD"/>
    <property type="match status" value="1"/>
</dbReference>
<dbReference type="PANTHER" id="PTHR32194:SF2">
    <property type="entry name" value="PROTEASOME SUBUNIT BETA TYPE-1"/>
    <property type="match status" value="1"/>
</dbReference>
<dbReference type="Pfam" id="PF00227">
    <property type="entry name" value="Proteasome"/>
    <property type="match status" value="1"/>
</dbReference>
<dbReference type="SUPFAM" id="SSF56235">
    <property type="entry name" value="N-terminal nucleophile aminohydrolases (Ntn hydrolases)"/>
    <property type="match status" value="1"/>
</dbReference>
<dbReference type="PROSITE" id="PS00854">
    <property type="entry name" value="PROTEASOME_BETA_1"/>
    <property type="match status" value="1"/>
</dbReference>
<dbReference type="PROSITE" id="PS51476">
    <property type="entry name" value="PROTEASOME_BETA_2"/>
    <property type="match status" value="1"/>
</dbReference>
<name>PSB4_PICGU</name>
<proteinExistence type="inferred from homology"/>
<gene>
    <name type="primary">PRO2</name>
    <name type="ORF">PGUG_00507</name>
</gene>
<protein>
    <recommendedName>
        <fullName>Probable proteasome subunit beta type-4</fullName>
    </recommendedName>
</protein>
<accession>A5DB52</accession>
<accession>Q6YJJ9</accession>
<keyword id="KW-0963">Cytoplasm</keyword>
<keyword id="KW-0539">Nucleus</keyword>
<keyword id="KW-0647">Proteasome</keyword>
<keyword id="KW-1185">Reference proteome</keyword>
<organism>
    <name type="scientific">Meyerozyma guilliermondii (strain ATCC 6260 / CBS 566 / DSM 6381 / JCM 1539 / NBRC 10279 / NRRL Y-324)</name>
    <name type="common">Yeast</name>
    <name type="synonym">Candida guilliermondii</name>
    <dbReference type="NCBI Taxonomy" id="294746"/>
    <lineage>
        <taxon>Eukaryota</taxon>
        <taxon>Fungi</taxon>
        <taxon>Dikarya</taxon>
        <taxon>Ascomycota</taxon>
        <taxon>Saccharomycotina</taxon>
        <taxon>Pichiomycetes</taxon>
        <taxon>Debaryomycetaceae</taxon>
        <taxon>Meyerozyma</taxon>
    </lineage>
</organism>
<reference key="1">
    <citation type="journal article" date="2009" name="Nature">
        <title>Evolution of pathogenicity and sexual reproduction in eight Candida genomes.</title>
        <authorList>
            <person name="Butler G."/>
            <person name="Rasmussen M.D."/>
            <person name="Lin M.F."/>
            <person name="Santos M.A.S."/>
            <person name="Sakthikumar S."/>
            <person name="Munro C.A."/>
            <person name="Rheinbay E."/>
            <person name="Grabherr M."/>
            <person name="Forche A."/>
            <person name="Reedy J.L."/>
            <person name="Agrafioti I."/>
            <person name="Arnaud M.B."/>
            <person name="Bates S."/>
            <person name="Brown A.J.P."/>
            <person name="Brunke S."/>
            <person name="Costanzo M.C."/>
            <person name="Fitzpatrick D.A."/>
            <person name="de Groot P.W.J."/>
            <person name="Harris D."/>
            <person name="Hoyer L.L."/>
            <person name="Hube B."/>
            <person name="Klis F.M."/>
            <person name="Kodira C."/>
            <person name="Lennard N."/>
            <person name="Logue M.E."/>
            <person name="Martin R."/>
            <person name="Neiman A.M."/>
            <person name="Nikolaou E."/>
            <person name="Quail M.A."/>
            <person name="Quinn J."/>
            <person name="Santos M.C."/>
            <person name="Schmitzberger F.F."/>
            <person name="Sherlock G."/>
            <person name="Shah P."/>
            <person name="Silverstein K.A.T."/>
            <person name="Skrzypek M.S."/>
            <person name="Soll D."/>
            <person name="Staggs R."/>
            <person name="Stansfield I."/>
            <person name="Stumpf M.P.H."/>
            <person name="Sudbery P.E."/>
            <person name="Srikantha T."/>
            <person name="Zeng Q."/>
            <person name="Berman J."/>
            <person name="Berriman M."/>
            <person name="Heitman J."/>
            <person name="Gow N.A.R."/>
            <person name="Lorenz M.C."/>
            <person name="Birren B.W."/>
            <person name="Kellis M."/>
            <person name="Cuomo C.A."/>
        </authorList>
    </citation>
    <scope>NUCLEOTIDE SEQUENCE [LARGE SCALE GENOMIC DNA]</scope>
    <source>
        <strain>ATCC 6260 / CBS 566 / DSM 6381 / JCM 1539 / NBRC 10279 / NRRL Y-324</strain>
    </source>
</reference>
<reference key="2">
    <citation type="journal article" date="2005" name="FEMS Yeast Res.">
        <title>Positive selection of mutants defective in transcriptional repression of riboflavin synthesis by iron in the flavinogenic yeast Pichia guilliermondii.</title>
        <authorList>
            <person name="Boretsky Y.R."/>
            <person name="Kapustyak K.Y."/>
            <person name="Fayura L.R."/>
            <person name="Stasyk O.V."/>
            <person name="Stenchuk M.M."/>
            <person name="Bobak Y.P."/>
            <person name="Drobot L.B."/>
            <person name="Sibirny A.A."/>
        </authorList>
    </citation>
    <scope>NUCLEOTIDE SEQUENCE [GENOMIC DNA] OF 1-192</scope>
</reference>
<evidence type="ECO:0000250" key="1"/>
<evidence type="ECO:0000255" key="2">
    <source>
        <dbReference type="PROSITE-ProRule" id="PRU00809"/>
    </source>
</evidence>
<evidence type="ECO:0000305" key="3"/>
<comment type="function">
    <text evidence="1">Non-catalytic component of the proteasome, a multicatalytic proteinase complex which is characterized by its ability to cleave peptides with Arg, Phe, Tyr, Leu, and Glu adjacent to the leaving group at neutral or slightly basic pH. The proteasome has an ATP-dependent proteolytic activity (By similarity).</text>
</comment>
<comment type="subunit">
    <text evidence="1">The 26S proteasome consists of a 20S proteasome core and two 19S regulatory subunits. The 20S proteasome core is composed of 28 subunits that are arranged in four stacked rings, resulting in a barrel-shaped structure. The two end rings are each formed by seven alpha subunits, and the two central rings are each formed by seven beta subunits. The catalytic chamber with the active sites is on the inside of the barrel (By similarity).</text>
</comment>
<comment type="subcellular location">
    <subcellularLocation>
        <location evidence="2">Cytoplasm</location>
    </subcellularLocation>
    <subcellularLocation>
        <location evidence="1">Nucleus</location>
    </subcellularLocation>
</comment>
<comment type="similarity">
    <text evidence="2">Belongs to the peptidase T1B family.</text>
</comment>
<comment type="sequence caution" evidence="3">
    <conflict type="frameshift">
        <sequence resource="EMBL-CDS" id="AAN08876"/>
    </conflict>
</comment>
<feature type="chain" id="PRO_0000295032" description="Probable proteasome subunit beta type-4">
    <location>
        <begin position="1"/>
        <end position="194"/>
    </location>
</feature>